<evidence type="ECO:0000255" key="1">
    <source>
        <dbReference type="HAMAP-Rule" id="MF_00109"/>
    </source>
</evidence>
<dbReference type="EC" id="2.7.1.71" evidence="1"/>
<dbReference type="EMBL" id="BX572594">
    <property type="protein sequence ID" value="CAE25948.1"/>
    <property type="molecule type" value="Genomic_DNA"/>
</dbReference>
<dbReference type="SMR" id="Q6NCG8"/>
<dbReference type="STRING" id="258594.RPA0504"/>
<dbReference type="eggNOG" id="COG0703">
    <property type="taxonomic scope" value="Bacteria"/>
</dbReference>
<dbReference type="HOGENOM" id="CLU_057607_2_0_5"/>
<dbReference type="PhylomeDB" id="Q6NCG8"/>
<dbReference type="UniPathway" id="UPA00053">
    <property type="reaction ID" value="UER00088"/>
</dbReference>
<dbReference type="GO" id="GO:0005829">
    <property type="term" value="C:cytosol"/>
    <property type="evidence" value="ECO:0007669"/>
    <property type="project" value="TreeGrafter"/>
</dbReference>
<dbReference type="GO" id="GO:0005524">
    <property type="term" value="F:ATP binding"/>
    <property type="evidence" value="ECO:0007669"/>
    <property type="project" value="UniProtKB-UniRule"/>
</dbReference>
<dbReference type="GO" id="GO:0000287">
    <property type="term" value="F:magnesium ion binding"/>
    <property type="evidence" value="ECO:0007669"/>
    <property type="project" value="UniProtKB-UniRule"/>
</dbReference>
<dbReference type="GO" id="GO:0004765">
    <property type="term" value="F:shikimate kinase activity"/>
    <property type="evidence" value="ECO:0007669"/>
    <property type="project" value="UniProtKB-UniRule"/>
</dbReference>
<dbReference type="GO" id="GO:0008652">
    <property type="term" value="P:amino acid biosynthetic process"/>
    <property type="evidence" value="ECO:0007669"/>
    <property type="project" value="UniProtKB-KW"/>
</dbReference>
<dbReference type="GO" id="GO:0009073">
    <property type="term" value="P:aromatic amino acid family biosynthetic process"/>
    <property type="evidence" value="ECO:0007669"/>
    <property type="project" value="UniProtKB-KW"/>
</dbReference>
<dbReference type="GO" id="GO:0009423">
    <property type="term" value="P:chorismate biosynthetic process"/>
    <property type="evidence" value="ECO:0007669"/>
    <property type="project" value="UniProtKB-UniRule"/>
</dbReference>
<dbReference type="CDD" id="cd00464">
    <property type="entry name" value="SK"/>
    <property type="match status" value="1"/>
</dbReference>
<dbReference type="Gene3D" id="3.40.50.300">
    <property type="entry name" value="P-loop containing nucleotide triphosphate hydrolases"/>
    <property type="match status" value="1"/>
</dbReference>
<dbReference type="HAMAP" id="MF_00109">
    <property type="entry name" value="Shikimate_kinase"/>
    <property type="match status" value="1"/>
</dbReference>
<dbReference type="InterPro" id="IPR027417">
    <property type="entry name" value="P-loop_NTPase"/>
</dbReference>
<dbReference type="InterPro" id="IPR031322">
    <property type="entry name" value="Shikimate/glucono_kinase"/>
</dbReference>
<dbReference type="InterPro" id="IPR000623">
    <property type="entry name" value="Shikimate_kinase/TSH1"/>
</dbReference>
<dbReference type="InterPro" id="IPR023000">
    <property type="entry name" value="Shikimate_kinase_CS"/>
</dbReference>
<dbReference type="NCBIfam" id="NF010552">
    <property type="entry name" value="PRK13946.1"/>
    <property type="match status" value="1"/>
</dbReference>
<dbReference type="PANTHER" id="PTHR21087">
    <property type="entry name" value="SHIKIMATE KINASE"/>
    <property type="match status" value="1"/>
</dbReference>
<dbReference type="PANTHER" id="PTHR21087:SF16">
    <property type="entry name" value="SHIKIMATE KINASE 1, CHLOROPLASTIC"/>
    <property type="match status" value="1"/>
</dbReference>
<dbReference type="Pfam" id="PF01202">
    <property type="entry name" value="SKI"/>
    <property type="match status" value="1"/>
</dbReference>
<dbReference type="PRINTS" id="PR01100">
    <property type="entry name" value="SHIKIMTKNASE"/>
</dbReference>
<dbReference type="SUPFAM" id="SSF52540">
    <property type="entry name" value="P-loop containing nucleoside triphosphate hydrolases"/>
    <property type="match status" value="1"/>
</dbReference>
<dbReference type="PROSITE" id="PS01128">
    <property type="entry name" value="SHIKIMATE_KINASE"/>
    <property type="match status" value="1"/>
</dbReference>
<name>AROK_RHOPA</name>
<keyword id="KW-0028">Amino-acid biosynthesis</keyword>
<keyword id="KW-0057">Aromatic amino acid biosynthesis</keyword>
<keyword id="KW-0067">ATP-binding</keyword>
<keyword id="KW-0963">Cytoplasm</keyword>
<keyword id="KW-0418">Kinase</keyword>
<keyword id="KW-0460">Magnesium</keyword>
<keyword id="KW-0479">Metal-binding</keyword>
<keyword id="KW-0547">Nucleotide-binding</keyword>
<keyword id="KW-0808">Transferase</keyword>
<feature type="chain" id="PRO_0000237922" description="Shikimate kinase">
    <location>
        <begin position="1"/>
        <end position="203"/>
    </location>
</feature>
<feature type="binding site" evidence="1">
    <location>
        <begin position="38"/>
        <end position="43"/>
    </location>
    <ligand>
        <name>ATP</name>
        <dbReference type="ChEBI" id="CHEBI:30616"/>
    </ligand>
</feature>
<feature type="binding site" evidence="1">
    <location>
        <position position="42"/>
    </location>
    <ligand>
        <name>Mg(2+)</name>
        <dbReference type="ChEBI" id="CHEBI:18420"/>
    </ligand>
</feature>
<feature type="binding site" evidence="1">
    <location>
        <position position="60"/>
    </location>
    <ligand>
        <name>substrate</name>
    </ligand>
</feature>
<feature type="binding site" evidence="1">
    <location>
        <position position="84"/>
    </location>
    <ligand>
        <name>substrate</name>
    </ligand>
</feature>
<feature type="binding site" evidence="1">
    <location>
        <position position="106"/>
    </location>
    <ligand>
        <name>substrate</name>
    </ligand>
</feature>
<feature type="binding site" evidence="1">
    <location>
        <position position="144"/>
    </location>
    <ligand>
        <name>ATP</name>
        <dbReference type="ChEBI" id="CHEBI:30616"/>
    </ligand>
</feature>
<feature type="binding site" evidence="1">
    <location>
        <position position="163"/>
    </location>
    <ligand>
        <name>substrate</name>
    </ligand>
</feature>
<sequence length="203" mass="22174">MPRMSETVPTAAAGRSPQEAEIVAALGDRPVVLIGMMGAGKSTVGRRLALRLGLPFLDADTEIESAAAMTIPEIFETHGEPHFRDGEARVISRLLDGGTKVLATGGGAFMREETRDRIREKAISMWLEAEADVILRRVKRRADRPLLKTPDPAGTIARLIAERYPLYREADITIASRDVPHEKIVDECVAALHDYLCAAPPQP</sequence>
<reference key="1">
    <citation type="journal article" date="2004" name="Nat. Biotechnol.">
        <title>Complete genome sequence of the metabolically versatile photosynthetic bacterium Rhodopseudomonas palustris.</title>
        <authorList>
            <person name="Larimer F.W."/>
            <person name="Chain P."/>
            <person name="Hauser L."/>
            <person name="Lamerdin J.E."/>
            <person name="Malfatti S."/>
            <person name="Do L."/>
            <person name="Land M.L."/>
            <person name="Pelletier D.A."/>
            <person name="Beatty J.T."/>
            <person name="Lang A.S."/>
            <person name="Tabita F.R."/>
            <person name="Gibson J.L."/>
            <person name="Hanson T.E."/>
            <person name="Bobst C."/>
            <person name="Torres y Torres J.L."/>
            <person name="Peres C."/>
            <person name="Harrison F.H."/>
            <person name="Gibson J."/>
            <person name="Harwood C.S."/>
        </authorList>
    </citation>
    <scope>NUCLEOTIDE SEQUENCE [LARGE SCALE GENOMIC DNA]</scope>
    <source>
        <strain>ATCC BAA-98 / CGA009</strain>
    </source>
</reference>
<gene>
    <name evidence="1" type="primary">aroK</name>
    <name type="ordered locus">RPA0504</name>
</gene>
<accession>Q6NCG8</accession>
<proteinExistence type="inferred from homology"/>
<comment type="function">
    <text evidence="1">Catalyzes the specific phosphorylation of the 3-hydroxyl group of shikimic acid using ATP as a cosubstrate.</text>
</comment>
<comment type="catalytic activity">
    <reaction evidence="1">
        <text>shikimate + ATP = 3-phosphoshikimate + ADP + H(+)</text>
        <dbReference type="Rhea" id="RHEA:13121"/>
        <dbReference type="ChEBI" id="CHEBI:15378"/>
        <dbReference type="ChEBI" id="CHEBI:30616"/>
        <dbReference type="ChEBI" id="CHEBI:36208"/>
        <dbReference type="ChEBI" id="CHEBI:145989"/>
        <dbReference type="ChEBI" id="CHEBI:456216"/>
        <dbReference type="EC" id="2.7.1.71"/>
    </reaction>
</comment>
<comment type="cofactor">
    <cofactor evidence="1">
        <name>Mg(2+)</name>
        <dbReference type="ChEBI" id="CHEBI:18420"/>
    </cofactor>
    <text evidence="1">Binds 1 Mg(2+) ion per subunit.</text>
</comment>
<comment type="pathway">
    <text evidence="1">Metabolic intermediate biosynthesis; chorismate biosynthesis; chorismate from D-erythrose 4-phosphate and phosphoenolpyruvate: step 5/7.</text>
</comment>
<comment type="subunit">
    <text evidence="1">Monomer.</text>
</comment>
<comment type="subcellular location">
    <subcellularLocation>
        <location evidence="1">Cytoplasm</location>
    </subcellularLocation>
</comment>
<comment type="similarity">
    <text evidence="1">Belongs to the shikimate kinase family.</text>
</comment>
<protein>
    <recommendedName>
        <fullName evidence="1">Shikimate kinase</fullName>
        <shortName evidence="1">SK</shortName>
        <ecNumber evidence="1">2.7.1.71</ecNumber>
    </recommendedName>
</protein>
<organism>
    <name type="scientific">Rhodopseudomonas palustris (strain ATCC BAA-98 / CGA009)</name>
    <dbReference type="NCBI Taxonomy" id="258594"/>
    <lineage>
        <taxon>Bacteria</taxon>
        <taxon>Pseudomonadati</taxon>
        <taxon>Pseudomonadota</taxon>
        <taxon>Alphaproteobacteria</taxon>
        <taxon>Hyphomicrobiales</taxon>
        <taxon>Nitrobacteraceae</taxon>
        <taxon>Rhodopseudomonas</taxon>
    </lineage>
</organism>